<evidence type="ECO:0000255" key="1">
    <source>
        <dbReference type="HAMAP-Rule" id="MF_00366"/>
    </source>
</evidence>
<accession>B2JEI3</accession>
<keyword id="KW-0240">DNA-directed RNA polymerase</keyword>
<keyword id="KW-0548">Nucleotidyltransferase</keyword>
<keyword id="KW-1185">Reference proteome</keyword>
<keyword id="KW-0804">Transcription</keyword>
<keyword id="KW-0808">Transferase</keyword>
<organism>
    <name type="scientific">Paraburkholderia phymatum (strain DSM 17167 / CIP 108236 / LMG 21445 / STM815)</name>
    <name type="common">Burkholderia phymatum</name>
    <dbReference type="NCBI Taxonomy" id="391038"/>
    <lineage>
        <taxon>Bacteria</taxon>
        <taxon>Pseudomonadati</taxon>
        <taxon>Pseudomonadota</taxon>
        <taxon>Betaproteobacteria</taxon>
        <taxon>Burkholderiales</taxon>
        <taxon>Burkholderiaceae</taxon>
        <taxon>Paraburkholderia</taxon>
    </lineage>
</organism>
<sequence length="67" mass="7428">MARITVEDCLKQIPNRFELALAATYRARQLAQGHTPKIESRDKPTVVALREIAAGQVGVEMLKKVPV</sequence>
<dbReference type="EC" id="2.7.7.6" evidence="1"/>
<dbReference type="EMBL" id="CP001043">
    <property type="protein sequence ID" value="ACC69860.1"/>
    <property type="molecule type" value="Genomic_DNA"/>
</dbReference>
<dbReference type="RefSeq" id="WP_006025620.1">
    <property type="nucleotide sequence ID" value="NZ_CADFGH010000020.1"/>
</dbReference>
<dbReference type="SMR" id="B2JEI3"/>
<dbReference type="STRING" id="391038.Bphy_0670"/>
<dbReference type="GeneID" id="98102617"/>
<dbReference type="KEGG" id="bph:Bphy_0670"/>
<dbReference type="eggNOG" id="COG1758">
    <property type="taxonomic scope" value="Bacteria"/>
</dbReference>
<dbReference type="HOGENOM" id="CLU_125406_5_2_4"/>
<dbReference type="OrthoDB" id="9796300at2"/>
<dbReference type="Proteomes" id="UP000001192">
    <property type="component" value="Chromosome 1"/>
</dbReference>
<dbReference type="GO" id="GO:0000428">
    <property type="term" value="C:DNA-directed RNA polymerase complex"/>
    <property type="evidence" value="ECO:0007669"/>
    <property type="project" value="UniProtKB-KW"/>
</dbReference>
<dbReference type="GO" id="GO:0003677">
    <property type="term" value="F:DNA binding"/>
    <property type="evidence" value="ECO:0007669"/>
    <property type="project" value="UniProtKB-UniRule"/>
</dbReference>
<dbReference type="GO" id="GO:0003899">
    <property type="term" value="F:DNA-directed RNA polymerase activity"/>
    <property type="evidence" value="ECO:0007669"/>
    <property type="project" value="UniProtKB-UniRule"/>
</dbReference>
<dbReference type="GO" id="GO:0006351">
    <property type="term" value="P:DNA-templated transcription"/>
    <property type="evidence" value="ECO:0007669"/>
    <property type="project" value="UniProtKB-UniRule"/>
</dbReference>
<dbReference type="Gene3D" id="3.90.940.10">
    <property type="match status" value="1"/>
</dbReference>
<dbReference type="HAMAP" id="MF_00366">
    <property type="entry name" value="RNApol_bact_RpoZ"/>
    <property type="match status" value="1"/>
</dbReference>
<dbReference type="InterPro" id="IPR003716">
    <property type="entry name" value="DNA-dir_RNA_pol_omega"/>
</dbReference>
<dbReference type="InterPro" id="IPR006110">
    <property type="entry name" value="Pol_omega/Rpo6/RPB6"/>
</dbReference>
<dbReference type="InterPro" id="IPR036161">
    <property type="entry name" value="RPB6/omega-like_sf"/>
</dbReference>
<dbReference type="NCBIfam" id="TIGR00690">
    <property type="entry name" value="rpoZ"/>
    <property type="match status" value="1"/>
</dbReference>
<dbReference type="PANTHER" id="PTHR34476">
    <property type="entry name" value="DNA-DIRECTED RNA POLYMERASE SUBUNIT OMEGA"/>
    <property type="match status" value="1"/>
</dbReference>
<dbReference type="PANTHER" id="PTHR34476:SF1">
    <property type="entry name" value="DNA-DIRECTED RNA POLYMERASE SUBUNIT OMEGA"/>
    <property type="match status" value="1"/>
</dbReference>
<dbReference type="Pfam" id="PF01192">
    <property type="entry name" value="RNA_pol_Rpb6"/>
    <property type="match status" value="1"/>
</dbReference>
<dbReference type="SMART" id="SM01409">
    <property type="entry name" value="RNA_pol_Rpb6"/>
    <property type="match status" value="1"/>
</dbReference>
<dbReference type="SUPFAM" id="SSF63562">
    <property type="entry name" value="RPB6/omega subunit-like"/>
    <property type="match status" value="1"/>
</dbReference>
<protein>
    <recommendedName>
        <fullName evidence="1">DNA-directed RNA polymerase subunit omega</fullName>
        <shortName evidence="1">RNAP omega subunit</shortName>
        <ecNumber evidence="1">2.7.7.6</ecNumber>
    </recommendedName>
    <alternativeName>
        <fullName evidence="1">RNA polymerase omega subunit</fullName>
    </alternativeName>
    <alternativeName>
        <fullName evidence="1">Transcriptase subunit omega</fullName>
    </alternativeName>
</protein>
<proteinExistence type="inferred from homology"/>
<reference key="1">
    <citation type="journal article" date="2014" name="Stand. Genomic Sci.">
        <title>Complete genome sequence of Burkholderia phymatum STM815(T), a broad host range and efficient nitrogen-fixing symbiont of Mimosa species.</title>
        <authorList>
            <person name="Moulin L."/>
            <person name="Klonowska A."/>
            <person name="Caroline B."/>
            <person name="Booth K."/>
            <person name="Vriezen J.A."/>
            <person name="Melkonian R."/>
            <person name="James E.K."/>
            <person name="Young J.P."/>
            <person name="Bena G."/>
            <person name="Hauser L."/>
            <person name="Land M."/>
            <person name="Kyrpides N."/>
            <person name="Bruce D."/>
            <person name="Chain P."/>
            <person name="Copeland A."/>
            <person name="Pitluck S."/>
            <person name="Woyke T."/>
            <person name="Lizotte-Waniewski M."/>
            <person name="Bristow J."/>
            <person name="Riley M."/>
        </authorList>
    </citation>
    <scope>NUCLEOTIDE SEQUENCE [LARGE SCALE GENOMIC DNA]</scope>
    <source>
        <strain>DSM 17167 / CIP 108236 / LMG 21445 / STM815</strain>
    </source>
</reference>
<feature type="chain" id="PRO_1000121199" description="DNA-directed RNA polymerase subunit omega">
    <location>
        <begin position="1"/>
        <end position="67"/>
    </location>
</feature>
<name>RPOZ_PARP8</name>
<comment type="function">
    <text evidence="1">Promotes RNA polymerase assembly. Latches the N- and C-terminal regions of the beta' subunit thereby facilitating its interaction with the beta and alpha subunits.</text>
</comment>
<comment type="catalytic activity">
    <reaction evidence="1">
        <text>RNA(n) + a ribonucleoside 5'-triphosphate = RNA(n+1) + diphosphate</text>
        <dbReference type="Rhea" id="RHEA:21248"/>
        <dbReference type="Rhea" id="RHEA-COMP:14527"/>
        <dbReference type="Rhea" id="RHEA-COMP:17342"/>
        <dbReference type="ChEBI" id="CHEBI:33019"/>
        <dbReference type="ChEBI" id="CHEBI:61557"/>
        <dbReference type="ChEBI" id="CHEBI:140395"/>
        <dbReference type="EC" id="2.7.7.6"/>
    </reaction>
</comment>
<comment type="subunit">
    <text evidence="1">The RNAP catalytic core consists of 2 alpha, 1 beta, 1 beta' and 1 omega subunit. When a sigma factor is associated with the core the holoenzyme is formed, which can initiate transcription.</text>
</comment>
<comment type="similarity">
    <text evidence="1">Belongs to the RNA polymerase subunit omega family.</text>
</comment>
<gene>
    <name evidence="1" type="primary">rpoZ</name>
    <name type="ordered locus">Bphy_0670</name>
</gene>